<organism>
    <name type="scientific">Bos taurus</name>
    <name type="common">Bovine</name>
    <dbReference type="NCBI Taxonomy" id="9913"/>
    <lineage>
        <taxon>Eukaryota</taxon>
        <taxon>Metazoa</taxon>
        <taxon>Chordata</taxon>
        <taxon>Craniata</taxon>
        <taxon>Vertebrata</taxon>
        <taxon>Euteleostomi</taxon>
        <taxon>Mammalia</taxon>
        <taxon>Eutheria</taxon>
        <taxon>Laurasiatheria</taxon>
        <taxon>Artiodactyla</taxon>
        <taxon>Ruminantia</taxon>
        <taxon>Pecora</taxon>
        <taxon>Bovidae</taxon>
        <taxon>Bovinae</taxon>
        <taxon>Bos</taxon>
    </lineage>
</organism>
<feature type="chain" id="PRO_0000268845" description="Ubiquitin carboxyl-terminal hydrolase 14">
    <location>
        <begin position="1"/>
        <end position="494"/>
    </location>
</feature>
<feature type="domain" description="Ubiquitin-like" evidence="4">
    <location>
        <begin position="4"/>
        <end position="80"/>
    </location>
</feature>
<feature type="domain" description="USP">
    <location>
        <begin position="105"/>
        <end position="483"/>
    </location>
</feature>
<feature type="active site" description="Nucleophile" evidence="5 6">
    <location>
        <position position="114"/>
    </location>
</feature>
<feature type="active site" description="Proton acceptor" evidence="5 6">
    <location>
        <position position="435"/>
    </location>
</feature>
<feature type="modified residue" description="Phosphothreonine" evidence="2">
    <location>
        <position position="52"/>
    </location>
</feature>
<feature type="modified residue" description="Phosphoserine" evidence="2">
    <location>
        <position position="143"/>
    </location>
</feature>
<feature type="modified residue" description="Phosphoserine" evidence="3">
    <location>
        <position position="148"/>
    </location>
</feature>
<feature type="modified residue" description="Phosphothreonine" evidence="2">
    <location>
        <position position="235"/>
    </location>
</feature>
<feature type="modified residue" description="Phosphoserine" evidence="2">
    <location>
        <position position="237"/>
    </location>
</feature>
<feature type="modified residue" description="Phosphoserine" evidence="2">
    <location>
        <position position="302"/>
    </location>
</feature>
<feature type="modified residue" description="Phosphoserine" evidence="2">
    <location>
        <position position="432"/>
    </location>
</feature>
<feature type="modified residue" description="N6-acetyllysine" evidence="2">
    <location>
        <position position="449"/>
    </location>
</feature>
<proteinExistence type="evidence at transcript level"/>
<accession>Q0IIF7</accession>
<name>UBP14_BOVIN</name>
<dbReference type="EC" id="3.4.19.12"/>
<dbReference type="EMBL" id="BC122666">
    <property type="protein sequence ID" value="AAI22667.1"/>
    <property type="molecule type" value="mRNA"/>
</dbReference>
<dbReference type="RefSeq" id="NP_001068657.1">
    <property type="nucleotide sequence ID" value="NM_001075189.1"/>
</dbReference>
<dbReference type="RefSeq" id="XP_015315570.1">
    <property type="nucleotide sequence ID" value="XM_015460084.1"/>
</dbReference>
<dbReference type="BMRB" id="Q0IIF7"/>
<dbReference type="SMR" id="Q0IIF7"/>
<dbReference type="FunCoup" id="Q0IIF7">
    <property type="interactions" value="4596"/>
</dbReference>
<dbReference type="STRING" id="9913.ENSBTAP00000063666"/>
<dbReference type="MEROPS" id="C19.015"/>
<dbReference type="PaxDb" id="9913-ENSBTAP00000025580"/>
<dbReference type="Ensembl" id="ENSBTAT00000025580.6">
    <property type="protein sequence ID" value="ENSBTAP00000025580.6"/>
    <property type="gene ID" value="ENSBTAG00000019214.7"/>
</dbReference>
<dbReference type="GeneID" id="505106"/>
<dbReference type="KEGG" id="bta:505106"/>
<dbReference type="CTD" id="9097"/>
<dbReference type="VEuPathDB" id="HostDB:ENSBTAG00000019214"/>
<dbReference type="VGNC" id="VGNC:36712">
    <property type="gene designation" value="USP14"/>
</dbReference>
<dbReference type="eggNOG" id="KOG1872">
    <property type="taxonomic scope" value="Eukaryota"/>
</dbReference>
<dbReference type="GeneTree" id="ENSGT00390000009615"/>
<dbReference type="InParanoid" id="Q0IIF7"/>
<dbReference type="OMA" id="FKSDAEY"/>
<dbReference type="OrthoDB" id="333239at2759"/>
<dbReference type="Reactome" id="R-BTA-5689880">
    <property type="pathway name" value="Ub-specific processing proteases"/>
</dbReference>
<dbReference type="Reactome" id="R-BTA-9758274">
    <property type="pathway name" value="Regulation of NF-kappa B signaling"/>
</dbReference>
<dbReference type="Proteomes" id="UP000009136">
    <property type="component" value="Chromosome 24"/>
</dbReference>
<dbReference type="Bgee" id="ENSBTAG00000019214">
    <property type="expression patterns" value="Expressed in omental fat pad and 105 other cell types or tissues"/>
</dbReference>
<dbReference type="GO" id="GO:0005737">
    <property type="term" value="C:cytoplasm"/>
    <property type="evidence" value="ECO:0007669"/>
    <property type="project" value="UniProtKB-SubCell"/>
</dbReference>
<dbReference type="GO" id="GO:0005886">
    <property type="term" value="C:plasma membrane"/>
    <property type="evidence" value="ECO:0007669"/>
    <property type="project" value="UniProtKB-SubCell"/>
</dbReference>
<dbReference type="GO" id="GO:0000502">
    <property type="term" value="C:proteasome complex"/>
    <property type="evidence" value="ECO:0007669"/>
    <property type="project" value="UniProtKB-KW"/>
</dbReference>
<dbReference type="GO" id="GO:0004843">
    <property type="term" value="F:cysteine-type deubiquitinase activity"/>
    <property type="evidence" value="ECO:0000314"/>
    <property type="project" value="UniProtKB"/>
</dbReference>
<dbReference type="GO" id="GO:0070628">
    <property type="term" value="F:proteasome binding"/>
    <property type="evidence" value="ECO:0000314"/>
    <property type="project" value="UniProtKB"/>
</dbReference>
<dbReference type="GO" id="GO:0045087">
    <property type="term" value="P:innate immune response"/>
    <property type="evidence" value="ECO:0007669"/>
    <property type="project" value="UniProtKB-KW"/>
</dbReference>
<dbReference type="GO" id="GO:1904293">
    <property type="term" value="P:negative regulation of ERAD pathway"/>
    <property type="evidence" value="ECO:0000318"/>
    <property type="project" value="GO_Central"/>
</dbReference>
<dbReference type="GO" id="GO:0043161">
    <property type="term" value="P:proteasome-mediated ubiquitin-dependent protein catabolic process"/>
    <property type="evidence" value="ECO:0007669"/>
    <property type="project" value="InterPro"/>
</dbReference>
<dbReference type="GO" id="GO:0016579">
    <property type="term" value="P:protein deubiquitination"/>
    <property type="evidence" value="ECO:0007669"/>
    <property type="project" value="InterPro"/>
</dbReference>
<dbReference type="CDD" id="cd02657">
    <property type="entry name" value="Peptidase_C19A"/>
    <property type="match status" value="1"/>
</dbReference>
<dbReference type="CDD" id="cd16104">
    <property type="entry name" value="Ubl_USP14_like"/>
    <property type="match status" value="1"/>
</dbReference>
<dbReference type="FunFam" id="3.10.20.90:FF:000119">
    <property type="entry name" value="Ubiquitin carboxyl-terminal hydrolase 14"/>
    <property type="match status" value="1"/>
</dbReference>
<dbReference type="FunFam" id="3.90.70.10:FF:000032">
    <property type="entry name" value="Ubiquitin carboxyl-terminal hydrolase 14"/>
    <property type="match status" value="1"/>
</dbReference>
<dbReference type="Gene3D" id="3.90.70.10">
    <property type="entry name" value="Cysteine proteinases"/>
    <property type="match status" value="1"/>
</dbReference>
<dbReference type="Gene3D" id="3.10.20.90">
    <property type="entry name" value="Phosphatidylinositol 3-kinase Catalytic Subunit, Chain A, domain 1"/>
    <property type="match status" value="1"/>
</dbReference>
<dbReference type="InterPro" id="IPR038765">
    <property type="entry name" value="Papain-like_cys_pep_sf"/>
</dbReference>
<dbReference type="InterPro" id="IPR001394">
    <property type="entry name" value="Peptidase_C19_UCH"/>
</dbReference>
<dbReference type="InterPro" id="IPR000626">
    <property type="entry name" value="Ubiquitin-like_dom"/>
</dbReference>
<dbReference type="InterPro" id="IPR029071">
    <property type="entry name" value="Ubiquitin-like_domsf"/>
</dbReference>
<dbReference type="InterPro" id="IPR019954">
    <property type="entry name" value="Ubiquitin_CS"/>
</dbReference>
<dbReference type="InterPro" id="IPR044635">
    <property type="entry name" value="UBP14-like"/>
</dbReference>
<dbReference type="InterPro" id="IPR018200">
    <property type="entry name" value="USP_CS"/>
</dbReference>
<dbReference type="InterPro" id="IPR028889">
    <property type="entry name" value="USP_dom"/>
</dbReference>
<dbReference type="PANTHER" id="PTHR43982">
    <property type="entry name" value="UBIQUITIN CARBOXYL-TERMINAL HYDROLASE"/>
    <property type="match status" value="1"/>
</dbReference>
<dbReference type="PANTHER" id="PTHR43982:SF1">
    <property type="entry name" value="UBIQUITIN CARBOXYL-TERMINAL HYDROLASE 14"/>
    <property type="match status" value="1"/>
</dbReference>
<dbReference type="Pfam" id="PF00443">
    <property type="entry name" value="UCH"/>
    <property type="match status" value="1"/>
</dbReference>
<dbReference type="SMART" id="SM00213">
    <property type="entry name" value="UBQ"/>
    <property type="match status" value="1"/>
</dbReference>
<dbReference type="SUPFAM" id="SSF54001">
    <property type="entry name" value="Cysteine proteinases"/>
    <property type="match status" value="1"/>
</dbReference>
<dbReference type="SUPFAM" id="SSF54236">
    <property type="entry name" value="Ubiquitin-like"/>
    <property type="match status" value="1"/>
</dbReference>
<dbReference type="PROSITE" id="PS00299">
    <property type="entry name" value="UBIQUITIN_1"/>
    <property type="match status" value="1"/>
</dbReference>
<dbReference type="PROSITE" id="PS50053">
    <property type="entry name" value="UBIQUITIN_2"/>
    <property type="match status" value="1"/>
</dbReference>
<dbReference type="PROSITE" id="PS00972">
    <property type="entry name" value="USP_1"/>
    <property type="match status" value="1"/>
</dbReference>
<dbReference type="PROSITE" id="PS00973">
    <property type="entry name" value="USP_2"/>
    <property type="match status" value="1"/>
</dbReference>
<dbReference type="PROSITE" id="PS50235">
    <property type="entry name" value="USP_3"/>
    <property type="match status" value="1"/>
</dbReference>
<protein>
    <recommendedName>
        <fullName>Ubiquitin carboxyl-terminal hydrolase 14</fullName>
        <ecNumber>3.4.19.12</ecNumber>
    </recommendedName>
    <alternativeName>
        <fullName>Deubiquitinating enzyme 14</fullName>
    </alternativeName>
    <alternativeName>
        <fullName>Ubiquitin thioesterase 14</fullName>
    </alternativeName>
    <alternativeName>
        <fullName>Ubiquitin-specific-processing protease 14</fullName>
    </alternativeName>
</protein>
<sequence>MPLYSVTVKWGKEKFEGVELNTDEPPMVFKAQLFALTGVQPARQKVMVKGGTLKDDDWGNIKMKNGMTVLMMGSADALPEEPSAKTVFVEDMTEEQLASAMELPCGLTNLGNTCYMNATVQCIRSVPELKDALKRYAGALRASGEMASAQYITAALRDLFDSMDKTSSSIPPIILLQFLHMAFPQFAEKGEQGQYLQQDANECWVQMMRVLQQKLEAIEDDTVKETDSSSASAVTPSKKKSLIDQFFGVEFETTMKCTESEEEEVTKGKESQLQLSCFINQEVKYLFTGLKLRLQEEITKQSPTLQRNALYIKSSKISRLPAYLTIQMVRFFYKEKESVNAKVLKDVKFPLMLDVYELCTPELQEKMVSFRSKFKDLEDKKVNQQPKTGDKDSSPQKEVKYEPFSFADDIGSNNCGYYDLQAVLTHQGRSSSSGHYVSWVKRKQDEWIKFDDDKVSIVTPEDILRLSGGGDWHIAYVLLYGPRRVEIMEEESEQ</sequence>
<evidence type="ECO:0000250" key="1"/>
<evidence type="ECO:0000250" key="2">
    <source>
        <dbReference type="UniProtKB" id="P54578"/>
    </source>
</evidence>
<evidence type="ECO:0000250" key="3">
    <source>
        <dbReference type="UniProtKB" id="Q9JMA1"/>
    </source>
</evidence>
<evidence type="ECO:0000255" key="4">
    <source>
        <dbReference type="PROSITE-ProRule" id="PRU00214"/>
    </source>
</evidence>
<evidence type="ECO:0000255" key="5">
    <source>
        <dbReference type="PROSITE-ProRule" id="PRU10092"/>
    </source>
</evidence>
<evidence type="ECO:0000255" key="6">
    <source>
        <dbReference type="PROSITE-ProRule" id="PRU10093"/>
    </source>
</evidence>
<evidence type="ECO:0000305" key="7"/>
<gene>
    <name type="primary">USP14</name>
</gene>
<comment type="function">
    <text evidence="2 3">Proteasome-associated deubiquitinase which releases ubiquitin from the proteasome targeted ubiquitinated proteins. Ensures the regeneration of ubiquitin at the proteasome. Is a reversibly associated subunit of the proteasome and a large fraction of proteasome-free protein exists within the cell. Required for the degradation of the chemokine receptor CXCR4 which is critical for CXCL12-induced cell chemotaxis. Also serves as a physiological inhibitor of endoplasmic reticulum-associated degradation (ERAD) under the non-stressed condition by inhibiting the degradation of unfolded endoplasmic reticulum proteins via interaction with ERN1 (By similarity). Indispensable for synaptic development and function at neuromuscular junctions (NMJs) (By similarity). Plays a role in the innate immune defense against viruses by stabilizing the viral DNA sensor CGAS and thus inhibiting its autophagic degradation (By similarity).</text>
</comment>
<comment type="catalytic activity">
    <reaction>
        <text>Thiol-dependent hydrolysis of ester, thioester, amide, peptide and isopeptide bonds formed by the C-terminal Gly of ubiquitin (a 76-residue protein attached to proteins as an intracellular targeting signal).</text>
        <dbReference type="EC" id="3.4.19.12"/>
    </reaction>
</comment>
<comment type="subunit">
    <text evidence="2">Homodimer (Potential). Associates with the 26S proteasome. Interacts with FANCC, CXCR4 and ERN1. Interacts with TRIM14; this interaction recruits USP14 to cleave ubiquitin chains of CGAS (By similarity).</text>
</comment>
<comment type="subcellular location">
    <subcellularLocation>
        <location evidence="1">Cytoplasm</location>
    </subcellularLocation>
    <subcellularLocation>
        <location evidence="1">Cell membrane</location>
        <topology evidence="1">Peripheral membrane protein</topology>
    </subcellularLocation>
</comment>
<comment type="similarity">
    <text evidence="7">Belongs to the peptidase C19 family. USP14/UBP6 subfamily.</text>
</comment>
<keyword id="KW-0007">Acetylation</keyword>
<keyword id="KW-1003">Cell membrane</keyword>
<keyword id="KW-0963">Cytoplasm</keyword>
<keyword id="KW-0378">Hydrolase</keyword>
<keyword id="KW-0391">Immunity</keyword>
<keyword id="KW-0399">Innate immunity</keyword>
<keyword id="KW-0472">Membrane</keyword>
<keyword id="KW-0597">Phosphoprotein</keyword>
<keyword id="KW-0645">Protease</keyword>
<keyword id="KW-0647">Proteasome</keyword>
<keyword id="KW-1185">Reference proteome</keyword>
<keyword id="KW-0788">Thiol protease</keyword>
<keyword id="KW-0833">Ubl conjugation pathway</keyword>
<reference key="1">
    <citation type="submission" date="2006-08" db="EMBL/GenBank/DDBJ databases">
        <authorList>
            <consortium name="NIH - Mammalian Gene Collection (MGC) project"/>
        </authorList>
    </citation>
    <scope>NUCLEOTIDE SEQUENCE [LARGE SCALE MRNA]</scope>
    <source>
        <strain>Hereford</strain>
        <tissue>Fetal pons</tissue>
    </source>
</reference>
<reference key="2">
    <citation type="journal article" date="2008" name="Mol. Biol. Cell">
        <title>Relative structural and functional roles of multiple deubiquitylating proteins associated with mammalian 26S proteasome.</title>
        <authorList>
            <person name="Koulich E."/>
            <person name="Li X."/>
            <person name="DeMartino G.N."/>
        </authorList>
    </citation>
    <scope>ASSOCIATION WITH THE 26S PROTEASOME</scope>
</reference>